<sequence length="151" mass="17062">MTIKPSDSVSWFQVLQRGQHYMKTWPADKRLAPVFPENRVTVVTRFGIRFMPPLAIFTLTWQIALGGQLGPAIATALFACGLPLQGLWWLGKRAITPLPPTLLQWFHEVRHKLSEAGQAVAPIEPIPTYQSLADLLKRAFKQLDKTFLDDL</sequence>
<reference key="1">
    <citation type="journal article" date="2007" name="PLoS Genet.">
        <title>The complete genome sequence of Yersinia pseudotuberculosis IP31758, the causative agent of Far East scarlet-like fever.</title>
        <authorList>
            <person name="Eppinger M."/>
            <person name="Rosovitz M.J."/>
            <person name="Fricke W.F."/>
            <person name="Rasko D.A."/>
            <person name="Kokorina G."/>
            <person name="Fayolle C."/>
            <person name="Lindler L.E."/>
            <person name="Carniel E."/>
            <person name="Ravel J."/>
        </authorList>
    </citation>
    <scope>NUCLEOTIDE SEQUENCE [LARGE SCALE GENOMIC DNA]</scope>
    <source>
        <strain>IP 31758</strain>
    </source>
</reference>
<comment type="subcellular location">
    <subcellularLocation>
        <location evidence="1">Cell inner membrane</location>
        <topology evidence="1">Multi-pass membrane protein</topology>
    </subcellularLocation>
</comment>
<comment type="similarity">
    <text evidence="1">Belongs to the UPF0208 family.</text>
</comment>
<feature type="chain" id="PRO_1000064987" description="UPF0208 membrane protein YpsIP31758_1444">
    <location>
        <begin position="1"/>
        <end position="151"/>
    </location>
</feature>
<feature type="transmembrane region" description="Helical" evidence="1">
    <location>
        <begin position="46"/>
        <end position="66"/>
    </location>
</feature>
<feature type="transmembrane region" description="Helical" evidence="1">
    <location>
        <begin position="69"/>
        <end position="89"/>
    </location>
</feature>
<proteinExistence type="inferred from homology"/>
<protein>
    <recommendedName>
        <fullName evidence="1">UPF0208 membrane protein YpsIP31758_1444</fullName>
    </recommendedName>
</protein>
<name>Y1444_YERP3</name>
<keyword id="KW-0997">Cell inner membrane</keyword>
<keyword id="KW-1003">Cell membrane</keyword>
<keyword id="KW-0472">Membrane</keyword>
<keyword id="KW-0812">Transmembrane</keyword>
<keyword id="KW-1133">Transmembrane helix</keyword>
<organism>
    <name type="scientific">Yersinia pseudotuberculosis serotype O:1b (strain IP 31758)</name>
    <dbReference type="NCBI Taxonomy" id="349747"/>
    <lineage>
        <taxon>Bacteria</taxon>
        <taxon>Pseudomonadati</taxon>
        <taxon>Pseudomonadota</taxon>
        <taxon>Gammaproteobacteria</taxon>
        <taxon>Enterobacterales</taxon>
        <taxon>Yersiniaceae</taxon>
        <taxon>Yersinia</taxon>
    </lineage>
</organism>
<gene>
    <name type="ordered locus">YpsIP31758_1444</name>
</gene>
<dbReference type="EMBL" id="CP000720">
    <property type="protein sequence ID" value="ABS47119.1"/>
    <property type="molecule type" value="Genomic_DNA"/>
</dbReference>
<dbReference type="KEGG" id="ypi:YpsIP31758_1444"/>
<dbReference type="HOGENOM" id="CLU_128746_0_0_6"/>
<dbReference type="Proteomes" id="UP000002412">
    <property type="component" value="Chromosome"/>
</dbReference>
<dbReference type="GO" id="GO:0005886">
    <property type="term" value="C:plasma membrane"/>
    <property type="evidence" value="ECO:0007669"/>
    <property type="project" value="UniProtKB-SubCell"/>
</dbReference>
<dbReference type="HAMAP" id="MF_01101">
    <property type="entry name" value="UPF0208"/>
    <property type="match status" value="1"/>
</dbReference>
<dbReference type="InterPro" id="IPR007334">
    <property type="entry name" value="UPF0208"/>
</dbReference>
<dbReference type="NCBIfam" id="NF002493">
    <property type="entry name" value="PRK01816.1"/>
    <property type="match status" value="1"/>
</dbReference>
<dbReference type="Pfam" id="PF04217">
    <property type="entry name" value="DUF412"/>
    <property type="match status" value="1"/>
</dbReference>
<evidence type="ECO:0000255" key="1">
    <source>
        <dbReference type="HAMAP-Rule" id="MF_01101"/>
    </source>
</evidence>
<accession>A7FGP5</accession>